<sequence>MASQAHSLSYSGCNFLRQRLVLSTLSGRPVKIRKIRARDDNPGLRDFEASFIRLLDKVTNGSRIEINQTGTTLYYQPGLLYGGSMEHDCSVLRGIGYYLESLLCLAPFMKHPLRIVLRGVTNDQVDPSVDVLKATALPLLKQFGIDGESFELKVVRRGMPPGGGGEVFFSCPVRKVLKPIQLIDPGKIKRIRGMAYSVRVSPQMANRIVDSARSILNKFIPDIYIYTDHMKGINSGKSPGFGLSLVAETTNGTFLSAELASNPQGQGAAMLPEDLGRNCARLLLEEIYRGGCVDSTNQSLALLLMTLGQQDVSKVLLGPLSPYTIEFLRHLKSFFQIMFKIETKPCGEELKGGDKVLMTCVGIGFSNLSKTLK</sequence>
<organism>
    <name type="scientific">Bos taurus</name>
    <name type="common">Bovine</name>
    <dbReference type="NCBI Taxonomy" id="9913"/>
    <lineage>
        <taxon>Eukaryota</taxon>
        <taxon>Metazoa</taxon>
        <taxon>Chordata</taxon>
        <taxon>Craniata</taxon>
        <taxon>Vertebrata</taxon>
        <taxon>Euteleostomi</taxon>
        <taxon>Mammalia</taxon>
        <taxon>Eutheria</taxon>
        <taxon>Laurasiatheria</taxon>
        <taxon>Artiodactyla</taxon>
        <taxon>Ruminantia</taxon>
        <taxon>Pecora</taxon>
        <taxon>Bovidae</taxon>
        <taxon>Bovinae</taxon>
        <taxon>Bos</taxon>
    </lineage>
</organism>
<evidence type="ECO:0000250" key="1">
    <source>
        <dbReference type="UniProtKB" id="Q08096"/>
    </source>
</evidence>
<evidence type="ECO:0000250" key="2">
    <source>
        <dbReference type="UniProtKB" id="Q9Y2P8"/>
    </source>
</evidence>
<evidence type="ECO:0000305" key="3"/>
<accession>Q2KHX8</accession>
<reference key="1">
    <citation type="submission" date="2006-01" db="EMBL/GenBank/DDBJ databases">
        <authorList>
            <consortium name="NIH - Mammalian Gene Collection (MGC) project"/>
        </authorList>
    </citation>
    <scope>NUCLEOTIDE SEQUENCE [LARGE SCALE MRNA]</scope>
    <source>
        <strain>Hereford</strain>
        <tissue>Hypothalamus</tissue>
    </source>
</reference>
<gene>
    <name type="primary">RCL1</name>
</gene>
<name>RCL1_BOVIN</name>
<comment type="function">
    <text evidence="1">As part of the small subunit (SSU) processome, it plays a role in 40S-ribosomal-subunit biogenesis in the early pre-rRNA processing steps at sites A0, A1 and A2 that are required for proper maturation of the 18S RNA (By similarity). Activates BMS1 by promoting GDP/GTP exchange (By similarity). Does not have cyclase activity (By similarity).</text>
</comment>
<comment type="subunit">
    <text evidence="2">Part of the small subunit (SSU) processome, composed of more than 70 proteins and the RNA chaperone small nucleolar RNA (snoRNA) U3. Interacts with BMS1.</text>
</comment>
<comment type="subcellular location">
    <subcellularLocation>
        <location evidence="2">Nucleus</location>
        <location evidence="2">Nucleolus</location>
    </subcellularLocation>
</comment>
<comment type="similarity">
    <text evidence="3">Belongs to the RNA 3'-terminal cyclase family. Type 2 subfamily.</text>
</comment>
<keyword id="KW-0539">Nucleus</keyword>
<keyword id="KW-1185">Reference proteome</keyword>
<keyword id="KW-0690">Ribosome biogenesis</keyword>
<proteinExistence type="evidence at transcript level"/>
<feature type="chain" id="PRO_0000288840" description="RNA 3'-terminal phosphate cyclase-like protein">
    <location>
        <begin position="1"/>
        <end position="373"/>
    </location>
</feature>
<dbReference type="EMBL" id="BC112844">
    <property type="protein sequence ID" value="AAI12845.1"/>
    <property type="molecule type" value="mRNA"/>
</dbReference>
<dbReference type="RefSeq" id="NP_001070599.1">
    <property type="nucleotide sequence ID" value="NM_001077131.1"/>
</dbReference>
<dbReference type="SMR" id="Q2KHX8"/>
<dbReference type="FunCoup" id="Q2KHX8">
    <property type="interactions" value="2274"/>
</dbReference>
<dbReference type="STRING" id="9913.ENSBTAP00000074347"/>
<dbReference type="PaxDb" id="9913-ENSBTAP00000024840"/>
<dbReference type="GeneID" id="768075"/>
<dbReference type="KEGG" id="bta:768075"/>
<dbReference type="CTD" id="10171"/>
<dbReference type="VEuPathDB" id="HostDB:ENSBTAG00000018667"/>
<dbReference type="eggNOG" id="KOG3980">
    <property type="taxonomic scope" value="Eukaryota"/>
</dbReference>
<dbReference type="HOGENOM" id="CLU_027882_1_0_1"/>
<dbReference type="InParanoid" id="Q2KHX8"/>
<dbReference type="OMA" id="YTDQNKG"/>
<dbReference type="OrthoDB" id="1911237at2759"/>
<dbReference type="TreeFam" id="TF300831"/>
<dbReference type="Reactome" id="R-BTA-6791226">
    <property type="pathway name" value="Major pathway of rRNA processing in the nucleolus and cytosol"/>
</dbReference>
<dbReference type="CD-CODE" id="D7FE2080">
    <property type="entry name" value="Nucleolus"/>
</dbReference>
<dbReference type="Proteomes" id="UP000009136">
    <property type="component" value="Chromosome 8"/>
</dbReference>
<dbReference type="Bgee" id="ENSBTAG00000018667">
    <property type="expression patterns" value="Expressed in liver and 106 other cell types or tissues"/>
</dbReference>
<dbReference type="GO" id="GO:0005730">
    <property type="term" value="C:nucleolus"/>
    <property type="evidence" value="ECO:0007669"/>
    <property type="project" value="UniProtKB-SubCell"/>
</dbReference>
<dbReference type="GO" id="GO:0032040">
    <property type="term" value="C:small-subunit processome"/>
    <property type="evidence" value="ECO:0000250"/>
    <property type="project" value="UniProtKB"/>
</dbReference>
<dbReference type="GO" id="GO:0004521">
    <property type="term" value="F:RNA endonuclease activity"/>
    <property type="evidence" value="ECO:0000318"/>
    <property type="project" value="GO_Central"/>
</dbReference>
<dbReference type="GO" id="GO:0000479">
    <property type="term" value="P:endonucleolytic cleavage of tricistronic rRNA transcript (SSU-rRNA, 5.8S rRNA, LSU-rRNA)"/>
    <property type="evidence" value="ECO:0000318"/>
    <property type="project" value="GO_Central"/>
</dbReference>
<dbReference type="GO" id="GO:0042274">
    <property type="term" value="P:ribosomal small subunit biogenesis"/>
    <property type="evidence" value="ECO:0000250"/>
    <property type="project" value="UniProtKB"/>
</dbReference>
<dbReference type="CDD" id="cd00875">
    <property type="entry name" value="RNA_Cyclase_Class_I"/>
    <property type="match status" value="1"/>
</dbReference>
<dbReference type="FunFam" id="3.30.360.20:FF:000001">
    <property type="entry name" value="RNA terminal phosphate cyclase-like 1"/>
    <property type="match status" value="1"/>
</dbReference>
<dbReference type="FunFam" id="3.65.10.20:FF:000001">
    <property type="entry name" value="RNA terminal phosphate cyclase-like 1"/>
    <property type="match status" value="1"/>
</dbReference>
<dbReference type="Gene3D" id="3.65.10.20">
    <property type="entry name" value="RNA 3'-terminal phosphate cyclase domain"/>
    <property type="match status" value="1"/>
</dbReference>
<dbReference type="Gene3D" id="3.30.360.20">
    <property type="entry name" value="RNA 3'-terminal phosphate cyclase, insert domain"/>
    <property type="match status" value="1"/>
</dbReference>
<dbReference type="InterPro" id="IPR013791">
    <property type="entry name" value="RNA3'-term_phos_cycl_insert"/>
</dbReference>
<dbReference type="InterPro" id="IPR023797">
    <property type="entry name" value="RNA3'_phos_cyclase_dom"/>
</dbReference>
<dbReference type="InterPro" id="IPR037136">
    <property type="entry name" value="RNA3'_phos_cyclase_dom_sf"/>
</dbReference>
<dbReference type="InterPro" id="IPR000228">
    <property type="entry name" value="RNA3'_term_phos_cyc"/>
</dbReference>
<dbReference type="InterPro" id="IPR016443">
    <property type="entry name" value="RNA3'_term_phos_cyc_type_2"/>
</dbReference>
<dbReference type="InterPro" id="IPR020719">
    <property type="entry name" value="RNA3'_term_phos_cycl-like_CS"/>
</dbReference>
<dbReference type="InterPro" id="IPR013792">
    <property type="entry name" value="RNA3'P_cycl/enolpyr_Trfase_a/b"/>
</dbReference>
<dbReference type="InterPro" id="IPR036553">
    <property type="entry name" value="RPTC_insert"/>
</dbReference>
<dbReference type="NCBIfam" id="TIGR03400">
    <property type="entry name" value="18S_RNA_Rcl1p"/>
    <property type="match status" value="1"/>
</dbReference>
<dbReference type="PANTHER" id="PTHR11096">
    <property type="entry name" value="RNA 3' TERMINAL PHOSPHATE CYCLASE"/>
    <property type="match status" value="1"/>
</dbReference>
<dbReference type="PANTHER" id="PTHR11096:SF1">
    <property type="entry name" value="RNA 3'-TERMINAL PHOSPHATE CYCLASE-LIKE PROTEIN"/>
    <property type="match status" value="1"/>
</dbReference>
<dbReference type="Pfam" id="PF01137">
    <property type="entry name" value="RTC"/>
    <property type="match status" value="1"/>
</dbReference>
<dbReference type="Pfam" id="PF05189">
    <property type="entry name" value="RTC_insert"/>
    <property type="match status" value="1"/>
</dbReference>
<dbReference type="PIRSF" id="PIRSF005378">
    <property type="entry name" value="RNA3'_term_phos_cycl_euk"/>
    <property type="match status" value="1"/>
</dbReference>
<dbReference type="SUPFAM" id="SSF55205">
    <property type="entry name" value="EPT/RTPC-like"/>
    <property type="match status" value="1"/>
</dbReference>
<dbReference type="PROSITE" id="PS01287">
    <property type="entry name" value="RTC"/>
    <property type="match status" value="1"/>
</dbReference>
<protein>
    <recommendedName>
        <fullName>RNA 3'-terminal phosphate cyclase-like protein</fullName>
    </recommendedName>
</protein>